<evidence type="ECO:0000250" key="1"/>
<evidence type="ECO:0000255" key="2">
    <source>
        <dbReference type="PROSITE-ProRule" id="PRU01210"/>
    </source>
</evidence>
<evidence type="ECO:0000269" key="3">
    <source>
    </source>
</evidence>
<evidence type="ECO:0000303" key="4">
    <source>
    </source>
</evidence>
<evidence type="ECO:0000305" key="5"/>
<evidence type="ECO:0000305" key="6">
    <source>
    </source>
</evidence>
<name>SCXE_TITPA</name>
<reference key="1">
    <citation type="journal article" date="2018" name="Toxicon">
        <title>Venoms of Centruroides and Tityus species from Panama and their main toxic fractions.</title>
        <authorList>
            <person name="Salazar M.H."/>
            <person name="Arenas I."/>
            <person name="Corrales-Garcia L.L."/>
            <person name="Miranda R."/>
            <person name="Velez S."/>
            <person name="Sanchez J."/>
            <person name="Mendoza K."/>
            <person name="Cleghorn J."/>
            <person name="Zamudio F.Z."/>
            <person name="Castillo A."/>
            <person name="Possani L.D."/>
            <person name="Corzo G."/>
            <person name="Acosta H."/>
        </authorList>
    </citation>
    <scope>PROTEIN SEQUENCE</scope>
    <scope>MASS SPECTROMETRY</scope>
    <scope>SUBCELLULAR LOCATION</scope>
    <source>
        <strain>Cocle area</strain>
        <tissue>Venom</tissue>
    </source>
</reference>
<organism>
    <name type="scientific">Tityus pachyurus</name>
    <name type="common">Colombian scorpion</name>
    <dbReference type="NCBI Taxonomy" id="288781"/>
    <lineage>
        <taxon>Eukaryota</taxon>
        <taxon>Metazoa</taxon>
        <taxon>Ecdysozoa</taxon>
        <taxon>Arthropoda</taxon>
        <taxon>Chelicerata</taxon>
        <taxon>Arachnida</taxon>
        <taxon>Scorpiones</taxon>
        <taxon>Buthida</taxon>
        <taxon>Buthoidea</taxon>
        <taxon>Buthidae</taxon>
        <taxon>Tityus</taxon>
    </lineage>
</organism>
<protein>
    <recommendedName>
        <fullName evidence="4">Toxin TpF21-Cocle</fullName>
    </recommendedName>
</protein>
<keyword id="KW-0027">Amidation</keyword>
<keyword id="KW-0903">Direct protein sequencing</keyword>
<keyword id="KW-1015">Disulfide bond</keyword>
<keyword id="KW-0872">Ion channel impairing toxin</keyword>
<keyword id="KW-0528">Neurotoxin</keyword>
<keyword id="KW-0964">Secreted</keyword>
<keyword id="KW-0800">Toxin</keyword>
<keyword id="KW-0738">Voltage-gated sodium channel impairing toxin</keyword>
<proteinExistence type="evidence at protein level"/>
<accession>P0DW31</accession>
<dbReference type="GO" id="GO:0005576">
    <property type="term" value="C:extracellular region"/>
    <property type="evidence" value="ECO:0007669"/>
    <property type="project" value="UniProtKB-SubCell"/>
</dbReference>
<dbReference type="GO" id="GO:0008200">
    <property type="term" value="F:ion channel inhibitor activity"/>
    <property type="evidence" value="ECO:0007669"/>
    <property type="project" value="InterPro"/>
</dbReference>
<dbReference type="GO" id="GO:0017080">
    <property type="term" value="F:sodium channel regulator activity"/>
    <property type="evidence" value="ECO:0007669"/>
    <property type="project" value="UniProtKB-KW"/>
</dbReference>
<dbReference type="GO" id="GO:0090729">
    <property type="term" value="F:toxin activity"/>
    <property type="evidence" value="ECO:0007669"/>
    <property type="project" value="UniProtKB-KW"/>
</dbReference>
<dbReference type="InterPro" id="IPR044062">
    <property type="entry name" value="LCN-type_CS_alpha_beta_dom"/>
</dbReference>
<dbReference type="PROSITE" id="PS51863">
    <property type="entry name" value="LCN_CSAB"/>
    <property type="match status" value="1"/>
</dbReference>
<sequence>KDGYLVGNDGCKYSCNTYPK</sequence>
<comment type="function">
    <text evidence="1">Beta toxins bind voltage-independently at site-4 of sodium channels (Nav) and shift the voltage of activation toward more negative potentials thereby affecting sodium channel activation and promoting spontaneous and repetitive firing.</text>
</comment>
<comment type="subcellular location">
    <subcellularLocation>
        <location evidence="3">Secreted</location>
    </subcellularLocation>
</comment>
<comment type="tissue specificity">
    <text evidence="6">Expressed by the venom gland.</text>
</comment>
<comment type="domain">
    <text evidence="5">Has the structural arrangement of an alpha-helix connected to antiparallel beta-sheets by disulfide bonds (CS-alpha/beta).</text>
</comment>
<comment type="mass spectrometry">
    <text>Average mass.</text>
</comment>
<comment type="similarity">
    <text evidence="5">Belongs to the long (4 C-C) scorpion toxin superfamily. Sodium channel inhibitor family. Beta subfamily.</text>
</comment>
<feature type="chain" id="PRO_0000456229" description="Toxin TpF21-Cocle" evidence="6">
    <location>
        <begin position="1"/>
        <end position="20" status="greater than"/>
    </location>
</feature>
<feature type="domain" description="LCN-type CS-alpha/beta" evidence="2">
    <location>
        <begin position="1"/>
        <end position="20" status="greater than"/>
    </location>
</feature>
<feature type="disulfide bond" evidence="2">
    <location>
        <begin position="11"/>
        <end status="unknown"/>
    </location>
</feature>
<feature type="disulfide bond" evidence="2">
    <location>
        <begin position="15"/>
        <end status="unknown"/>
    </location>
</feature>
<feature type="non-terminal residue" evidence="6">
    <location>
        <position position="20"/>
    </location>
</feature>